<accession>P26924</accession>
<protein>
    <recommendedName>
        <fullName evidence="1">Anthranilate phosphoribosyltransferase</fullName>
        <ecNumber evidence="1">2.4.2.18</ecNumber>
    </recommendedName>
</protein>
<keyword id="KW-0028">Amino-acid biosynthesis</keyword>
<keyword id="KW-0057">Aromatic amino acid biosynthesis</keyword>
<keyword id="KW-0328">Glycosyltransferase</keyword>
<keyword id="KW-0460">Magnesium</keyword>
<keyword id="KW-0479">Metal-binding</keyword>
<keyword id="KW-0808">Transferase</keyword>
<keyword id="KW-0822">Tryptophan biosynthesis</keyword>
<organism>
    <name type="scientific">Azospirillum brasilense</name>
    <dbReference type="NCBI Taxonomy" id="192"/>
    <lineage>
        <taxon>Bacteria</taxon>
        <taxon>Pseudomonadati</taxon>
        <taxon>Pseudomonadota</taxon>
        <taxon>Alphaproteobacteria</taxon>
        <taxon>Rhodospirillales</taxon>
        <taxon>Azospirillaceae</taxon>
        <taxon>Azospirillum</taxon>
    </lineage>
</organism>
<dbReference type="EC" id="2.4.2.18" evidence="1"/>
<dbReference type="EMBL" id="X57853">
    <property type="protein sequence ID" value="CAA40985.1"/>
    <property type="molecule type" value="Genomic_DNA"/>
</dbReference>
<dbReference type="PIR" id="S17704">
    <property type="entry name" value="S17704"/>
</dbReference>
<dbReference type="SMR" id="P26924"/>
<dbReference type="UniPathway" id="UPA00035">
    <property type="reaction ID" value="UER00041"/>
</dbReference>
<dbReference type="GO" id="GO:0005829">
    <property type="term" value="C:cytosol"/>
    <property type="evidence" value="ECO:0007669"/>
    <property type="project" value="TreeGrafter"/>
</dbReference>
<dbReference type="GO" id="GO:0004048">
    <property type="term" value="F:anthranilate phosphoribosyltransferase activity"/>
    <property type="evidence" value="ECO:0007669"/>
    <property type="project" value="UniProtKB-UniRule"/>
</dbReference>
<dbReference type="GO" id="GO:0000287">
    <property type="term" value="F:magnesium ion binding"/>
    <property type="evidence" value="ECO:0007669"/>
    <property type="project" value="UniProtKB-UniRule"/>
</dbReference>
<dbReference type="GO" id="GO:0000162">
    <property type="term" value="P:L-tryptophan biosynthetic process"/>
    <property type="evidence" value="ECO:0007669"/>
    <property type="project" value="UniProtKB-UniRule"/>
</dbReference>
<dbReference type="FunFam" id="3.40.1030.10:FF:000002">
    <property type="entry name" value="Anthranilate phosphoribosyltransferase"/>
    <property type="match status" value="1"/>
</dbReference>
<dbReference type="Gene3D" id="3.40.1030.10">
    <property type="entry name" value="Nucleoside phosphorylase/phosphoribosyltransferase catalytic domain"/>
    <property type="match status" value="1"/>
</dbReference>
<dbReference type="Gene3D" id="1.20.970.10">
    <property type="entry name" value="Transferase, Pyrimidine Nucleoside Phosphorylase, Chain C"/>
    <property type="match status" value="1"/>
</dbReference>
<dbReference type="HAMAP" id="MF_00211">
    <property type="entry name" value="TrpD"/>
    <property type="match status" value="1"/>
</dbReference>
<dbReference type="InterPro" id="IPR005940">
    <property type="entry name" value="Anthranilate_Pribosyl_Tfrase"/>
</dbReference>
<dbReference type="InterPro" id="IPR000312">
    <property type="entry name" value="Glycosyl_Trfase_fam3"/>
</dbReference>
<dbReference type="InterPro" id="IPR017459">
    <property type="entry name" value="Glycosyl_Trfase_fam3_N_dom"/>
</dbReference>
<dbReference type="InterPro" id="IPR036320">
    <property type="entry name" value="Glycosyl_Trfase_fam3_N_dom_sf"/>
</dbReference>
<dbReference type="InterPro" id="IPR035902">
    <property type="entry name" value="Nuc_phospho_transferase"/>
</dbReference>
<dbReference type="NCBIfam" id="TIGR01245">
    <property type="entry name" value="trpD"/>
    <property type="match status" value="1"/>
</dbReference>
<dbReference type="PANTHER" id="PTHR43285">
    <property type="entry name" value="ANTHRANILATE PHOSPHORIBOSYLTRANSFERASE"/>
    <property type="match status" value="1"/>
</dbReference>
<dbReference type="PANTHER" id="PTHR43285:SF2">
    <property type="entry name" value="ANTHRANILATE PHOSPHORIBOSYLTRANSFERASE"/>
    <property type="match status" value="1"/>
</dbReference>
<dbReference type="Pfam" id="PF02885">
    <property type="entry name" value="Glycos_trans_3N"/>
    <property type="match status" value="1"/>
</dbReference>
<dbReference type="Pfam" id="PF00591">
    <property type="entry name" value="Glycos_transf_3"/>
    <property type="match status" value="1"/>
</dbReference>
<dbReference type="SUPFAM" id="SSF52418">
    <property type="entry name" value="Nucleoside phosphorylase/phosphoribosyltransferase catalytic domain"/>
    <property type="match status" value="1"/>
</dbReference>
<dbReference type="SUPFAM" id="SSF47648">
    <property type="entry name" value="Nucleoside phosphorylase/phosphoribosyltransferase N-terminal domain"/>
    <property type="match status" value="1"/>
</dbReference>
<gene>
    <name evidence="1" type="primary">trpD</name>
</gene>
<reference key="1">
    <citation type="journal article" date="1991" name="Mol. Gen. Genet.">
        <title>Relationship between tryptophan biosynthesis and indole-3-acetic acid production in Azospirillum: identification and sequencing of a trpGDC cluster.</title>
        <authorList>
            <person name="Zimmer W."/>
            <person name="Aparicio C."/>
            <person name="Elmerich C."/>
        </authorList>
    </citation>
    <scope>NUCLEOTIDE SEQUENCE [GENOMIC DNA]</scope>
    <source>
        <strain>ATCC 29145 / DSM 1690 / IMET 11303 / Sp7</strain>
    </source>
</reference>
<proteinExistence type="inferred from homology"/>
<sequence length="355" mass="36721">MSTPSAPHGDLTDMKAILAKVAAGNALNEAEASLAFDIIMSGNATPSQMGGFLMALRVRGETVDEITGAARVMRAKAIPVEAPDGTIDTCGTGGDGSGTYNISTAAAVVIAACGVPVAKHGNRAMSSKSGAADVLGALGVNLDCDLGLVRKALWDARIGFLMAPRHHLAMRNVGPTRVGTRTIFNLLGPLSNPASAKRQLLGVYAKQWVEPLAHVLKRLGSEAAWIVHGSDGLDEITTTGPTTVAQLKDGEVTVFEIEPEQAGIFRARPELLKGGDAHVNAEAIRALFDGAQGAYRDIVLLNAAAALHVAGKAGDLKEGDERARHAIDSGAARAVLQHLVSITNSSITNEPVAAP</sequence>
<name>TRPD_AZOBR</name>
<feature type="chain" id="PRO_0000154422" description="Anthranilate phosphoribosyltransferase">
    <location>
        <begin position="1"/>
        <end position="355"/>
    </location>
</feature>
<feature type="binding site" evidence="1">
    <location>
        <position position="91"/>
    </location>
    <ligand>
        <name>5-phospho-alpha-D-ribose 1-diphosphate</name>
        <dbReference type="ChEBI" id="CHEBI:58017"/>
    </ligand>
</feature>
<feature type="binding site" evidence="1">
    <location>
        <position position="91"/>
    </location>
    <ligand>
        <name>anthranilate</name>
        <dbReference type="ChEBI" id="CHEBI:16567"/>
        <label>1</label>
    </ligand>
</feature>
<feature type="binding site" evidence="1">
    <location>
        <begin position="94"/>
        <end position="95"/>
    </location>
    <ligand>
        <name>5-phospho-alpha-D-ribose 1-diphosphate</name>
        <dbReference type="ChEBI" id="CHEBI:58017"/>
    </ligand>
</feature>
<feature type="binding site" evidence="1">
    <location>
        <position position="99"/>
    </location>
    <ligand>
        <name>5-phospho-alpha-D-ribose 1-diphosphate</name>
        <dbReference type="ChEBI" id="CHEBI:58017"/>
    </ligand>
</feature>
<feature type="binding site" evidence="1">
    <location>
        <begin position="101"/>
        <end position="104"/>
    </location>
    <ligand>
        <name>5-phospho-alpha-D-ribose 1-diphosphate</name>
        <dbReference type="ChEBI" id="CHEBI:58017"/>
    </ligand>
</feature>
<feature type="binding site" evidence="1">
    <location>
        <position position="103"/>
    </location>
    <ligand>
        <name>Mg(2+)</name>
        <dbReference type="ChEBI" id="CHEBI:18420"/>
        <label>1</label>
    </ligand>
</feature>
<feature type="binding site" evidence="1">
    <location>
        <begin position="119"/>
        <end position="127"/>
    </location>
    <ligand>
        <name>5-phospho-alpha-D-ribose 1-diphosphate</name>
        <dbReference type="ChEBI" id="CHEBI:58017"/>
    </ligand>
</feature>
<feature type="binding site" evidence="1">
    <location>
        <position position="122"/>
    </location>
    <ligand>
        <name>anthranilate</name>
        <dbReference type="ChEBI" id="CHEBI:16567"/>
        <label>1</label>
    </ligand>
</feature>
<feature type="binding site" evidence="1">
    <location>
        <position position="131"/>
    </location>
    <ligand>
        <name>5-phospho-alpha-D-ribose 1-diphosphate</name>
        <dbReference type="ChEBI" id="CHEBI:58017"/>
    </ligand>
</feature>
<feature type="binding site" evidence="1">
    <location>
        <position position="177"/>
    </location>
    <ligand>
        <name>anthranilate</name>
        <dbReference type="ChEBI" id="CHEBI:16567"/>
        <label>2</label>
    </ligand>
</feature>
<feature type="binding site" evidence="1">
    <location>
        <position position="234"/>
    </location>
    <ligand>
        <name>Mg(2+)</name>
        <dbReference type="ChEBI" id="CHEBI:18420"/>
        <label>2</label>
    </ligand>
</feature>
<feature type="binding site" evidence="1">
    <location>
        <position position="235"/>
    </location>
    <ligand>
        <name>Mg(2+)</name>
        <dbReference type="ChEBI" id="CHEBI:18420"/>
        <label>1</label>
    </ligand>
</feature>
<feature type="binding site" evidence="1">
    <location>
        <position position="235"/>
    </location>
    <ligand>
        <name>Mg(2+)</name>
        <dbReference type="ChEBI" id="CHEBI:18420"/>
        <label>2</label>
    </ligand>
</feature>
<comment type="function">
    <text>Participates in the tryptophan-dependent indole-3-acetic acid production, which is a phytohormone released by A.brasilense.</text>
</comment>
<comment type="function">
    <text evidence="1">Catalyzes the transfer of the phosphoribosyl group of 5-phosphorylribose-1-pyrophosphate (PRPP) to anthranilate to yield N-(5'-phosphoribosyl)-anthranilate (PRA).</text>
</comment>
<comment type="catalytic activity">
    <reaction evidence="1">
        <text>N-(5-phospho-beta-D-ribosyl)anthranilate + diphosphate = 5-phospho-alpha-D-ribose 1-diphosphate + anthranilate</text>
        <dbReference type="Rhea" id="RHEA:11768"/>
        <dbReference type="ChEBI" id="CHEBI:16567"/>
        <dbReference type="ChEBI" id="CHEBI:18277"/>
        <dbReference type="ChEBI" id="CHEBI:33019"/>
        <dbReference type="ChEBI" id="CHEBI:58017"/>
        <dbReference type="EC" id="2.4.2.18"/>
    </reaction>
</comment>
<comment type="cofactor">
    <cofactor evidence="1">
        <name>Mg(2+)</name>
        <dbReference type="ChEBI" id="CHEBI:18420"/>
    </cofactor>
    <text evidence="1">Binds 2 magnesium ions per monomer.</text>
</comment>
<comment type="pathway">
    <text evidence="1">Amino-acid biosynthesis; L-tryptophan biosynthesis; L-tryptophan from chorismate: step 2/5.</text>
</comment>
<comment type="subunit">
    <text evidence="1">Homodimer.</text>
</comment>
<comment type="similarity">
    <text evidence="1">Belongs to the anthranilate phosphoribosyltransferase family.</text>
</comment>
<evidence type="ECO:0000255" key="1">
    <source>
        <dbReference type="HAMAP-Rule" id="MF_00211"/>
    </source>
</evidence>